<feature type="signal peptide" evidence="3">
    <location>
        <begin position="1"/>
        <end position="22"/>
    </location>
</feature>
<feature type="chain" id="PRO_0000006932" description="Beta-defensin 6">
    <location>
        <begin position="23"/>
        <end position="63"/>
    </location>
</feature>
<feature type="modified residue" description="Pyrrolidone carboxylic acid" evidence="2">
    <location>
        <position position="23"/>
    </location>
</feature>
<feature type="disulfide bond" evidence="1">
    <location>
        <begin position="31"/>
        <end position="59"/>
    </location>
</feature>
<feature type="disulfide bond" evidence="1">
    <location>
        <begin position="38"/>
        <end position="52"/>
    </location>
</feature>
<feature type="disulfide bond" evidence="1">
    <location>
        <begin position="42"/>
        <end position="60"/>
    </location>
</feature>
<evidence type="ECO:0000250" key="1"/>
<evidence type="ECO:0000250" key="2">
    <source>
        <dbReference type="UniProtKB" id="P46164"/>
    </source>
</evidence>
<evidence type="ECO:0000255" key="3"/>
<evidence type="ECO:0000269" key="4">
    <source>
    </source>
</evidence>
<evidence type="ECO:0000305" key="5"/>
<dbReference type="EMBL" id="AB063110">
    <property type="protein sequence ID" value="BAB61109.1"/>
    <property type="molecule type" value="Genomic_DNA"/>
</dbReference>
<dbReference type="EMBL" id="AB063109">
    <property type="protein sequence ID" value="BAB61108.1"/>
    <property type="molecule type" value="mRNA"/>
</dbReference>
<dbReference type="CCDS" id="CCDS40255.1"/>
<dbReference type="RefSeq" id="NP_473415.1">
    <property type="nucleotide sequence ID" value="NM_054074.1"/>
</dbReference>
<dbReference type="SMR" id="Q91VD6"/>
<dbReference type="FunCoup" id="Q91VD6">
    <property type="interactions" value="146"/>
</dbReference>
<dbReference type="STRING" id="10090.ENSMUSP00000060836"/>
<dbReference type="PaxDb" id="10090-ENSMUSP00000060836"/>
<dbReference type="DNASU" id="116746"/>
<dbReference type="Ensembl" id="ENSMUST00000063112.4">
    <property type="protein sequence ID" value="ENSMUSP00000060836.4"/>
    <property type="gene ID" value="ENSMUSG00000050756.4"/>
</dbReference>
<dbReference type="GeneID" id="116746"/>
<dbReference type="KEGG" id="mmu:116746"/>
<dbReference type="UCSC" id="uc009lal.1">
    <property type="organism name" value="mouse"/>
</dbReference>
<dbReference type="AGR" id="MGI:2151044"/>
<dbReference type="CTD" id="116746"/>
<dbReference type="MGI" id="MGI:2151044">
    <property type="gene designation" value="Defb6"/>
</dbReference>
<dbReference type="VEuPathDB" id="HostDB:ENSMUSG00000050756"/>
<dbReference type="GeneTree" id="ENSGT01030000235924"/>
<dbReference type="HOGENOM" id="CLU_189296_4_1_1"/>
<dbReference type="InParanoid" id="Q91VD6"/>
<dbReference type="OMA" id="SERHKGD"/>
<dbReference type="OrthoDB" id="10338596at2759"/>
<dbReference type="PhylomeDB" id="Q91VD6"/>
<dbReference type="BioGRID-ORCS" id="116746">
    <property type="hits" value="1 hit in 74 CRISPR screens"/>
</dbReference>
<dbReference type="PRO" id="PR:Q91VD6"/>
<dbReference type="Proteomes" id="UP000000589">
    <property type="component" value="Chromosome 8"/>
</dbReference>
<dbReference type="RNAct" id="Q91VD6">
    <property type="molecule type" value="protein"/>
</dbReference>
<dbReference type="Bgee" id="ENSMUSG00000050756">
    <property type="expression patterns" value="Expressed in lip and 21 other cell types or tissues"/>
</dbReference>
<dbReference type="ExpressionAtlas" id="Q91VD6">
    <property type="expression patterns" value="baseline and differential"/>
</dbReference>
<dbReference type="GO" id="GO:0005576">
    <property type="term" value="C:extracellular region"/>
    <property type="evidence" value="ECO:0007669"/>
    <property type="project" value="UniProtKB-SubCell"/>
</dbReference>
<dbReference type="GO" id="GO:0050829">
    <property type="term" value="P:defense response to Gram-negative bacterium"/>
    <property type="evidence" value="ECO:0000314"/>
    <property type="project" value="MGI"/>
</dbReference>
<dbReference type="FunFam" id="3.10.360.10:FF:000001">
    <property type="entry name" value="Beta-defensin 1"/>
    <property type="match status" value="1"/>
</dbReference>
<dbReference type="Gene3D" id="3.10.360.10">
    <property type="entry name" value="Antimicrobial Peptide, Beta-defensin 2, Chain A"/>
    <property type="match status" value="1"/>
</dbReference>
<dbReference type="InterPro" id="IPR001855">
    <property type="entry name" value="Defensin_beta-like"/>
</dbReference>
<dbReference type="PANTHER" id="PTHR20515">
    <property type="entry name" value="BETA-DEFENSIN"/>
    <property type="match status" value="1"/>
</dbReference>
<dbReference type="PANTHER" id="PTHR20515:SF2">
    <property type="entry name" value="DEFENSIN BETA 4A"/>
    <property type="match status" value="1"/>
</dbReference>
<dbReference type="Pfam" id="PF00711">
    <property type="entry name" value="Defensin_beta"/>
    <property type="match status" value="1"/>
</dbReference>
<dbReference type="SUPFAM" id="SSF57392">
    <property type="entry name" value="Defensin-like"/>
    <property type="match status" value="1"/>
</dbReference>
<name>DEFB6_MOUSE</name>
<accession>Q91VD6</accession>
<gene>
    <name type="primary">Defb6</name>
</gene>
<proteinExistence type="evidence at transcript level"/>
<sequence>MKIHYLLFAFILVMLSPLAAFSQLINSPVTCMSYGGSCQRSCNGGFRLGGHCGHPKIRCCRRK</sequence>
<protein>
    <recommendedName>
        <fullName>Beta-defensin 6</fullName>
        <shortName>BD-6</shortName>
        <shortName>mBD-6</shortName>
    </recommendedName>
    <alternativeName>
        <fullName>Defensin, beta 6</fullName>
    </alternativeName>
</protein>
<keyword id="KW-0044">Antibiotic</keyword>
<keyword id="KW-0929">Antimicrobial</keyword>
<keyword id="KW-0211">Defensin</keyword>
<keyword id="KW-1015">Disulfide bond</keyword>
<keyword id="KW-0873">Pyrrolidone carboxylic acid</keyword>
<keyword id="KW-1185">Reference proteome</keyword>
<keyword id="KW-0964">Secreted</keyword>
<keyword id="KW-0732">Signal</keyword>
<reference key="1">
    <citation type="journal article" date="2001" name="J. Biol. Chem.">
        <title>A novel mouse beta-defensin, mBD-6, predominantly expressed in skeletal muscle.</title>
        <authorList>
            <person name="Yamaguchi Y."/>
            <person name="Fukuhara S."/>
            <person name="Nagase T."/>
            <person name="Tomita T."/>
            <person name="Hitomi S."/>
            <person name="Kimura S."/>
            <person name="Kurihara H."/>
            <person name="Ouchi Y."/>
        </authorList>
    </citation>
    <scope>NUCLEOTIDE SEQUENCE [GENOMIC DNA / MRNA]</scope>
    <scope>SYNTHESIS OF 23-63</scope>
    <scope>FUNCTION</scope>
    <scope>TISSUE SPECIFICITY</scope>
    <source>
        <tissue>Skeletal muscle</tissue>
    </source>
</reference>
<organism>
    <name type="scientific">Mus musculus</name>
    <name type="common">Mouse</name>
    <dbReference type="NCBI Taxonomy" id="10090"/>
    <lineage>
        <taxon>Eukaryota</taxon>
        <taxon>Metazoa</taxon>
        <taxon>Chordata</taxon>
        <taxon>Craniata</taxon>
        <taxon>Vertebrata</taxon>
        <taxon>Euteleostomi</taxon>
        <taxon>Mammalia</taxon>
        <taxon>Eutheria</taxon>
        <taxon>Euarchontoglires</taxon>
        <taxon>Glires</taxon>
        <taxon>Rodentia</taxon>
        <taxon>Myomorpha</taxon>
        <taxon>Muroidea</taxon>
        <taxon>Muridae</taxon>
        <taxon>Murinae</taxon>
        <taxon>Mus</taxon>
        <taxon>Mus</taxon>
    </lineage>
</organism>
<comment type="function">
    <text evidence="4">Has potent antibacterial activity against E.coli (ATCC 25922).</text>
</comment>
<comment type="subcellular location">
    <subcellularLocation>
        <location>Secreted</location>
    </subcellularLocation>
</comment>
<comment type="tissue specificity">
    <text evidence="4">Predominantly expressed in skeletal muscle, also expressed in esophagus, tongue, and trachea. Also expressed in lung when induced by lipopolysaccharide.</text>
</comment>
<comment type="induction">
    <text>Expressed constitutively and induced by lipopolysaccharide (LPS).</text>
</comment>
<comment type="similarity">
    <text evidence="5">Belongs to the beta-defensin family.</text>
</comment>